<comment type="function">
    <text evidence="1">Anchors the catalytic components of the fumarate reductase complex to the cell membrane, binds quinones.</text>
</comment>
<comment type="subunit">
    <text evidence="1">Part of an enzyme complex containing four subunits: a flavoprotein (FrdA), an iron-sulfur protein (FrdB), and two hydrophobic anchor proteins (FrdC and FrdD).</text>
</comment>
<comment type="subcellular location">
    <subcellularLocation>
        <location evidence="1">Cell inner membrane</location>
        <topology evidence="1">Multi-pass membrane protein</topology>
    </subcellularLocation>
</comment>
<comment type="similarity">
    <text evidence="1">Belongs to the FrdC family.</text>
</comment>
<protein>
    <recommendedName>
        <fullName evidence="1">Fumarate reductase subunit C</fullName>
    </recommendedName>
    <alternativeName>
        <fullName evidence="1">Quinol-fumarate reductase subunit C</fullName>
        <shortName evidence="1">QFR subunit C</shortName>
    </alternativeName>
</protein>
<name>FRDC_ALIFM</name>
<sequence length="127" mass="14339">MSNRKPYVREMTRTWWKDHPFYRFYMVREATVLPLIFFTICLLVGLGSLVKGPLAWASWLDFMANPIVVALNIVALAGSLFHAQTFFSMMPQVMPIRLGGKTLDKKVVVLAQWAAVAAITLLVLVIV</sequence>
<feature type="chain" id="PRO_1000132389" description="Fumarate reductase subunit C">
    <location>
        <begin position="1"/>
        <end position="127"/>
    </location>
</feature>
<feature type="transmembrane region" description="Helical" evidence="1">
    <location>
        <begin position="30"/>
        <end position="50"/>
    </location>
</feature>
<feature type="transmembrane region" description="Helical" evidence="1">
    <location>
        <begin position="67"/>
        <end position="87"/>
    </location>
</feature>
<feature type="transmembrane region" description="Helical" evidence="1">
    <location>
        <begin position="107"/>
        <end position="127"/>
    </location>
</feature>
<organism>
    <name type="scientific">Aliivibrio fischeri (strain MJ11)</name>
    <name type="common">Vibrio fischeri</name>
    <dbReference type="NCBI Taxonomy" id="388396"/>
    <lineage>
        <taxon>Bacteria</taxon>
        <taxon>Pseudomonadati</taxon>
        <taxon>Pseudomonadota</taxon>
        <taxon>Gammaproteobacteria</taxon>
        <taxon>Vibrionales</taxon>
        <taxon>Vibrionaceae</taxon>
        <taxon>Aliivibrio</taxon>
    </lineage>
</organism>
<keyword id="KW-0997">Cell inner membrane</keyword>
<keyword id="KW-1003">Cell membrane</keyword>
<keyword id="KW-0472">Membrane</keyword>
<keyword id="KW-0812">Transmembrane</keyword>
<keyword id="KW-1133">Transmembrane helix</keyword>
<evidence type="ECO:0000255" key="1">
    <source>
        <dbReference type="HAMAP-Rule" id="MF_00708"/>
    </source>
</evidence>
<gene>
    <name evidence="1" type="primary">frdC</name>
    <name type="ordered locus">VFMJ11_2458</name>
</gene>
<dbReference type="EMBL" id="CP001139">
    <property type="protein sequence ID" value="ACH66883.1"/>
    <property type="molecule type" value="Genomic_DNA"/>
</dbReference>
<dbReference type="RefSeq" id="WP_005421183.1">
    <property type="nucleotide sequence ID" value="NC_011184.1"/>
</dbReference>
<dbReference type="SMR" id="B5FBS7"/>
<dbReference type="GeneID" id="54165059"/>
<dbReference type="KEGG" id="vfm:VFMJ11_2458"/>
<dbReference type="HOGENOM" id="CLU_156492_0_0_6"/>
<dbReference type="Proteomes" id="UP000001857">
    <property type="component" value="Chromosome I"/>
</dbReference>
<dbReference type="GO" id="GO:0045283">
    <property type="term" value="C:fumarate reductase complex"/>
    <property type="evidence" value="ECO:0007669"/>
    <property type="project" value="UniProtKB-UniRule"/>
</dbReference>
<dbReference type="GO" id="GO:0005886">
    <property type="term" value="C:plasma membrane"/>
    <property type="evidence" value="ECO:0007669"/>
    <property type="project" value="UniProtKB-SubCell"/>
</dbReference>
<dbReference type="GO" id="GO:0000104">
    <property type="term" value="F:succinate dehydrogenase activity"/>
    <property type="evidence" value="ECO:0007669"/>
    <property type="project" value="UniProtKB-UniRule"/>
</dbReference>
<dbReference type="CDD" id="cd00546">
    <property type="entry name" value="QFR_TypeD_subunitC"/>
    <property type="match status" value="1"/>
</dbReference>
<dbReference type="Gene3D" id="1.20.1300.10">
    <property type="entry name" value="Fumarate reductase/succinate dehydrogenase, transmembrane subunit"/>
    <property type="match status" value="1"/>
</dbReference>
<dbReference type="HAMAP" id="MF_00708">
    <property type="entry name" value="Fumarate_red_C"/>
    <property type="match status" value="1"/>
</dbReference>
<dbReference type="InterPro" id="IPR003510">
    <property type="entry name" value="Fumarate_red_C"/>
</dbReference>
<dbReference type="InterPro" id="IPR034804">
    <property type="entry name" value="SQR/QFR_C/D"/>
</dbReference>
<dbReference type="NCBIfam" id="NF003445">
    <property type="entry name" value="PRK04987.1"/>
    <property type="match status" value="1"/>
</dbReference>
<dbReference type="Pfam" id="PF02300">
    <property type="entry name" value="Fumarate_red_C"/>
    <property type="match status" value="1"/>
</dbReference>
<dbReference type="PIRSF" id="PIRSF000180">
    <property type="entry name" value="FrdC"/>
    <property type="match status" value="1"/>
</dbReference>
<dbReference type="SUPFAM" id="SSF81343">
    <property type="entry name" value="Fumarate reductase respiratory complex transmembrane subunits"/>
    <property type="match status" value="1"/>
</dbReference>
<proteinExistence type="inferred from homology"/>
<accession>B5FBS7</accession>
<reference key="1">
    <citation type="submission" date="2008-08" db="EMBL/GenBank/DDBJ databases">
        <title>Complete sequence of Vibrio fischeri strain MJ11.</title>
        <authorList>
            <person name="Mandel M.J."/>
            <person name="Stabb E.V."/>
            <person name="Ruby E.G."/>
            <person name="Ferriera S."/>
            <person name="Johnson J."/>
            <person name="Kravitz S."/>
            <person name="Beeson K."/>
            <person name="Sutton G."/>
            <person name="Rogers Y.-H."/>
            <person name="Friedman R."/>
            <person name="Frazier M."/>
            <person name="Venter J.C."/>
        </authorList>
    </citation>
    <scope>NUCLEOTIDE SEQUENCE [LARGE SCALE GENOMIC DNA]</scope>
    <source>
        <strain>MJ11</strain>
    </source>
</reference>